<comment type="function">
    <text evidence="1">Endonuclease that specifically degrades the RNA of RNA-DNA hybrids.</text>
</comment>
<comment type="catalytic activity">
    <reaction evidence="1">
        <text>Endonucleolytic cleavage to 5'-phosphomonoester.</text>
        <dbReference type="EC" id="3.1.26.4"/>
    </reaction>
</comment>
<comment type="cofactor">
    <cofactor evidence="1">
        <name>Mn(2+)</name>
        <dbReference type="ChEBI" id="CHEBI:29035"/>
    </cofactor>
    <cofactor evidence="1">
        <name>Mg(2+)</name>
        <dbReference type="ChEBI" id="CHEBI:18420"/>
    </cofactor>
    <text evidence="1">Manganese or magnesium. Binds 1 divalent metal ion per monomer in the absence of substrate. May bind a second metal ion after substrate binding.</text>
</comment>
<comment type="subcellular location">
    <subcellularLocation>
        <location evidence="1">Cytoplasm</location>
    </subcellularLocation>
</comment>
<comment type="similarity">
    <text evidence="1">Belongs to the RNase HII family.</text>
</comment>
<keyword id="KW-0963">Cytoplasm</keyword>
<keyword id="KW-0255">Endonuclease</keyword>
<keyword id="KW-0378">Hydrolase</keyword>
<keyword id="KW-0464">Manganese</keyword>
<keyword id="KW-0479">Metal-binding</keyword>
<keyword id="KW-0540">Nuclease</keyword>
<dbReference type="EC" id="3.1.26.4" evidence="1"/>
<dbReference type="EMBL" id="CP001164">
    <property type="protein sequence ID" value="ACI39235.1"/>
    <property type="molecule type" value="Genomic_DNA"/>
</dbReference>
<dbReference type="RefSeq" id="WP_000569419.1">
    <property type="nucleotide sequence ID" value="NC_011353.1"/>
</dbReference>
<dbReference type="SMR" id="B5Z0G2"/>
<dbReference type="KEGG" id="ecf:ECH74115_0193"/>
<dbReference type="HOGENOM" id="CLU_036532_3_2_6"/>
<dbReference type="GO" id="GO:0005737">
    <property type="term" value="C:cytoplasm"/>
    <property type="evidence" value="ECO:0007669"/>
    <property type="project" value="UniProtKB-SubCell"/>
</dbReference>
<dbReference type="GO" id="GO:0032299">
    <property type="term" value="C:ribonuclease H2 complex"/>
    <property type="evidence" value="ECO:0007669"/>
    <property type="project" value="TreeGrafter"/>
</dbReference>
<dbReference type="GO" id="GO:0030145">
    <property type="term" value="F:manganese ion binding"/>
    <property type="evidence" value="ECO:0007669"/>
    <property type="project" value="UniProtKB-UniRule"/>
</dbReference>
<dbReference type="GO" id="GO:0003723">
    <property type="term" value="F:RNA binding"/>
    <property type="evidence" value="ECO:0007669"/>
    <property type="project" value="InterPro"/>
</dbReference>
<dbReference type="GO" id="GO:0004523">
    <property type="term" value="F:RNA-DNA hybrid ribonuclease activity"/>
    <property type="evidence" value="ECO:0007669"/>
    <property type="project" value="UniProtKB-UniRule"/>
</dbReference>
<dbReference type="GO" id="GO:0043137">
    <property type="term" value="P:DNA replication, removal of RNA primer"/>
    <property type="evidence" value="ECO:0007669"/>
    <property type="project" value="TreeGrafter"/>
</dbReference>
<dbReference type="GO" id="GO:0006298">
    <property type="term" value="P:mismatch repair"/>
    <property type="evidence" value="ECO:0007669"/>
    <property type="project" value="TreeGrafter"/>
</dbReference>
<dbReference type="CDD" id="cd07182">
    <property type="entry name" value="RNase_HII_bacteria_HII_like"/>
    <property type="match status" value="1"/>
</dbReference>
<dbReference type="FunFam" id="3.30.420.10:FF:000006">
    <property type="entry name" value="Ribonuclease HII"/>
    <property type="match status" value="1"/>
</dbReference>
<dbReference type="Gene3D" id="3.30.420.10">
    <property type="entry name" value="Ribonuclease H-like superfamily/Ribonuclease H"/>
    <property type="match status" value="1"/>
</dbReference>
<dbReference type="HAMAP" id="MF_00052_B">
    <property type="entry name" value="RNase_HII_B"/>
    <property type="match status" value="1"/>
</dbReference>
<dbReference type="InterPro" id="IPR022898">
    <property type="entry name" value="RNase_HII"/>
</dbReference>
<dbReference type="InterPro" id="IPR001352">
    <property type="entry name" value="RNase_HII/HIII"/>
</dbReference>
<dbReference type="InterPro" id="IPR024567">
    <property type="entry name" value="RNase_HII/HIII_dom"/>
</dbReference>
<dbReference type="InterPro" id="IPR012337">
    <property type="entry name" value="RNaseH-like_sf"/>
</dbReference>
<dbReference type="InterPro" id="IPR036397">
    <property type="entry name" value="RNaseH_sf"/>
</dbReference>
<dbReference type="NCBIfam" id="NF000594">
    <property type="entry name" value="PRK00015.1-1"/>
    <property type="match status" value="1"/>
</dbReference>
<dbReference type="NCBIfam" id="NF000595">
    <property type="entry name" value="PRK00015.1-3"/>
    <property type="match status" value="1"/>
</dbReference>
<dbReference type="NCBIfam" id="NF000596">
    <property type="entry name" value="PRK00015.1-4"/>
    <property type="match status" value="1"/>
</dbReference>
<dbReference type="PANTHER" id="PTHR10954">
    <property type="entry name" value="RIBONUCLEASE H2 SUBUNIT A"/>
    <property type="match status" value="1"/>
</dbReference>
<dbReference type="PANTHER" id="PTHR10954:SF18">
    <property type="entry name" value="RIBONUCLEASE HII"/>
    <property type="match status" value="1"/>
</dbReference>
<dbReference type="Pfam" id="PF01351">
    <property type="entry name" value="RNase_HII"/>
    <property type="match status" value="1"/>
</dbReference>
<dbReference type="SUPFAM" id="SSF53098">
    <property type="entry name" value="Ribonuclease H-like"/>
    <property type="match status" value="1"/>
</dbReference>
<dbReference type="PROSITE" id="PS51975">
    <property type="entry name" value="RNASE_H_2"/>
    <property type="match status" value="1"/>
</dbReference>
<sequence>MIEFVYPHTQLVAGVDEVGRGPLVGAVVTAAVILDPARPIAGLNDSKKLSEKRRLALCEEIKEKALSWSLGRAEPHEIDELNILHATMLAMQRAVAGLHIAPEYVLIDGNRCPKLPMPAMAVVKGDSRVPEISAASILAKVTRDAEMAALDIVFPQYGFAQHKGYPTAFHLEKLAEHGATEHHRRSFGPVKRALGLAS</sequence>
<accession>B5Z0G2</accession>
<feature type="chain" id="PRO_1000091620" description="Ribonuclease HII">
    <location>
        <begin position="1"/>
        <end position="198"/>
    </location>
</feature>
<feature type="domain" description="RNase H type-2" evidence="2">
    <location>
        <begin position="10"/>
        <end position="198"/>
    </location>
</feature>
<feature type="binding site" evidence="1">
    <location>
        <position position="16"/>
    </location>
    <ligand>
        <name>a divalent metal cation</name>
        <dbReference type="ChEBI" id="CHEBI:60240"/>
    </ligand>
</feature>
<feature type="binding site" evidence="1">
    <location>
        <position position="17"/>
    </location>
    <ligand>
        <name>a divalent metal cation</name>
        <dbReference type="ChEBI" id="CHEBI:60240"/>
    </ligand>
</feature>
<feature type="binding site" evidence="1">
    <location>
        <position position="108"/>
    </location>
    <ligand>
        <name>a divalent metal cation</name>
        <dbReference type="ChEBI" id="CHEBI:60240"/>
    </ligand>
</feature>
<proteinExistence type="inferred from homology"/>
<protein>
    <recommendedName>
        <fullName evidence="1">Ribonuclease HII</fullName>
        <shortName evidence="1">RNase HII</shortName>
        <ecNumber evidence="1">3.1.26.4</ecNumber>
    </recommendedName>
</protein>
<evidence type="ECO:0000255" key="1">
    <source>
        <dbReference type="HAMAP-Rule" id="MF_00052"/>
    </source>
</evidence>
<evidence type="ECO:0000255" key="2">
    <source>
        <dbReference type="PROSITE-ProRule" id="PRU01319"/>
    </source>
</evidence>
<gene>
    <name evidence="1" type="primary">rnhB</name>
    <name type="ordered locus">ECH74115_0193</name>
</gene>
<reference key="1">
    <citation type="journal article" date="2011" name="Proc. Natl. Acad. Sci. U.S.A.">
        <title>Genomic anatomy of Escherichia coli O157:H7 outbreaks.</title>
        <authorList>
            <person name="Eppinger M."/>
            <person name="Mammel M.K."/>
            <person name="Leclerc J.E."/>
            <person name="Ravel J."/>
            <person name="Cebula T.A."/>
        </authorList>
    </citation>
    <scope>NUCLEOTIDE SEQUENCE [LARGE SCALE GENOMIC DNA]</scope>
    <source>
        <strain>EC4115 / EHEC</strain>
    </source>
</reference>
<organism>
    <name type="scientific">Escherichia coli O157:H7 (strain EC4115 / EHEC)</name>
    <dbReference type="NCBI Taxonomy" id="444450"/>
    <lineage>
        <taxon>Bacteria</taxon>
        <taxon>Pseudomonadati</taxon>
        <taxon>Pseudomonadota</taxon>
        <taxon>Gammaproteobacteria</taxon>
        <taxon>Enterobacterales</taxon>
        <taxon>Enterobacteriaceae</taxon>
        <taxon>Escherichia</taxon>
    </lineage>
</organism>
<name>RNH2_ECO5E</name>